<keyword id="KW-0106">Calcium</keyword>
<keyword id="KW-1015">Disulfide bond</keyword>
<keyword id="KW-0479">Metal-binding</keyword>
<keyword id="KW-0560">Oxidoreductase</keyword>
<keyword id="KW-0574">Periplasm</keyword>
<keyword id="KW-0634">PQQ</keyword>
<keyword id="KW-0677">Repeat</keyword>
<keyword id="KW-0732">Signal</keyword>
<keyword id="KW-0853">WD repeat</keyword>
<gene>
    <name evidence="7" type="primary">qedA</name>
</gene>
<accession>A8R3S4</accession>
<proteinExistence type="evidence at protein level"/>
<dbReference type="EC" id="1.1.2.8" evidence="10 11"/>
<dbReference type="EMBL" id="AB333783">
    <property type="protein sequence ID" value="BAF91141.1"/>
    <property type="molecule type" value="Genomic_DNA"/>
</dbReference>
<dbReference type="SMR" id="A8R3S4"/>
<dbReference type="KEGG" id="ag:BAF91141"/>
<dbReference type="UniPathway" id="UPA00780">
    <property type="reaction ID" value="UER00767"/>
</dbReference>
<dbReference type="GO" id="GO:0016020">
    <property type="term" value="C:membrane"/>
    <property type="evidence" value="ECO:0007669"/>
    <property type="project" value="InterPro"/>
</dbReference>
<dbReference type="GO" id="GO:0030288">
    <property type="term" value="C:outer membrane-bounded periplasmic space"/>
    <property type="evidence" value="ECO:0007669"/>
    <property type="project" value="InterPro"/>
</dbReference>
<dbReference type="GO" id="GO:0052934">
    <property type="term" value="F:alcohol dehydrogenase (cytochrome c) activity"/>
    <property type="evidence" value="ECO:0007669"/>
    <property type="project" value="UniProtKB-EC"/>
</dbReference>
<dbReference type="GO" id="GO:0005509">
    <property type="term" value="F:calcium ion binding"/>
    <property type="evidence" value="ECO:0007669"/>
    <property type="project" value="InterPro"/>
</dbReference>
<dbReference type="GO" id="GO:0006068">
    <property type="term" value="P:ethanol catabolic process"/>
    <property type="evidence" value="ECO:0007669"/>
    <property type="project" value="UniProtKB-UniPathway"/>
</dbReference>
<dbReference type="CDD" id="cd10277">
    <property type="entry name" value="PQQ_ADH_I"/>
    <property type="match status" value="1"/>
</dbReference>
<dbReference type="FunFam" id="2.140.10.10:FF:000003">
    <property type="entry name" value="Methanol dehydrogenase, large subunit"/>
    <property type="match status" value="1"/>
</dbReference>
<dbReference type="Gene3D" id="2.140.10.10">
    <property type="entry name" value="Quinoprotein alcohol dehydrogenase-like superfamily"/>
    <property type="match status" value="1"/>
</dbReference>
<dbReference type="InterPro" id="IPR034119">
    <property type="entry name" value="ADHI"/>
</dbReference>
<dbReference type="InterPro" id="IPR018391">
    <property type="entry name" value="PQQ_b-propeller_rpt"/>
</dbReference>
<dbReference type="InterPro" id="IPR017512">
    <property type="entry name" value="PQQ_MeOH/EtOH_DH"/>
</dbReference>
<dbReference type="InterPro" id="IPR002372">
    <property type="entry name" value="PQQ_rpt_dom"/>
</dbReference>
<dbReference type="InterPro" id="IPR011047">
    <property type="entry name" value="Quinoprotein_ADH-like_sf"/>
</dbReference>
<dbReference type="InterPro" id="IPR001479">
    <property type="entry name" value="Quinoprotein_DH_CS"/>
</dbReference>
<dbReference type="NCBIfam" id="TIGR03075">
    <property type="entry name" value="PQQ_enz_alc_DH"/>
    <property type="match status" value="1"/>
</dbReference>
<dbReference type="PANTHER" id="PTHR32303">
    <property type="entry name" value="QUINOPROTEIN ALCOHOL DEHYDROGENASE (CYTOCHROME C)"/>
    <property type="match status" value="1"/>
</dbReference>
<dbReference type="PANTHER" id="PTHR32303:SF20">
    <property type="entry name" value="QUINOPROTEIN ETHANOL DEHYDROGENASE"/>
    <property type="match status" value="1"/>
</dbReference>
<dbReference type="Pfam" id="PF01011">
    <property type="entry name" value="PQQ"/>
    <property type="match status" value="2"/>
</dbReference>
<dbReference type="SMART" id="SM00564">
    <property type="entry name" value="PQQ"/>
    <property type="match status" value="5"/>
</dbReference>
<dbReference type="SUPFAM" id="SSF50998">
    <property type="entry name" value="Quinoprotein alcohol dehydrogenase-like"/>
    <property type="match status" value="1"/>
</dbReference>
<dbReference type="PROSITE" id="PS00363">
    <property type="entry name" value="BACTERIAL_PQQ_1"/>
    <property type="match status" value="1"/>
</dbReference>
<dbReference type="PROSITE" id="PS00364">
    <property type="entry name" value="BACTERIAL_PQQ_2"/>
    <property type="match status" value="1"/>
</dbReference>
<name>QEDH_PSEPU</name>
<reference key="1">
    <citation type="journal article" date="2008" name="FEMS Microbiol. Lett.">
        <title>Disruption of quinoprotein ethanol dehydrogenase gene and adjacent genes in Pseudomonas putida HK5.</title>
        <authorList>
            <person name="Promden W."/>
            <person name="Vangnai A.S."/>
            <person name="Pongsawasdi P."/>
            <person name="Adachi O."/>
            <person name="Matsushita K."/>
            <person name="Toyama H."/>
        </authorList>
    </citation>
    <scope>NUCLEOTIDE SEQUENCE [GENOMIC DNA]</scope>
    <scope>FUNCTION</scope>
    <scope>INDUCTION</scope>
    <scope>DISRUPTION PHENOTYPE</scope>
    <scope>PATHWAY</scope>
    <scope>SUBCELLULAR LOCATION</scope>
    <source>
        <strain>HK5</strain>
    </source>
</reference>
<reference key="2">
    <citation type="journal article" date="1995" name="J. Bacteriol.">
        <title>Three distinct quinoprotein alcohol dehydrogenases are expressed when Pseudomonas putida is grown on different alcohols.</title>
        <authorList>
            <person name="Toyama H."/>
            <person name="Fujii A."/>
            <person name="Matsushita K."/>
            <person name="Shinagawa E."/>
            <person name="Ameyama M."/>
            <person name="Adachi O."/>
        </authorList>
    </citation>
    <scope>FUNCTION</scope>
    <scope>CATALYTIC ACTIVITY</scope>
    <scope>COFACTOR</scope>
    <scope>ACTIVITY REGULATION</scope>
    <scope>SUBSTRATE SPECIFICITY</scope>
    <scope>BIOPHYSICOCHEMICAL PROPERTIES</scope>
    <scope>SUBUNIT</scope>
    <scope>INDUCTION</scope>
    <source>
        <strain>HK5</strain>
    </source>
</reference>
<reference key="3">
    <citation type="journal article" date="2009" name="Microbiology">
        <title>Analysis of the promoter activities of the genes encoding three quinoprotein alcohol dehydrogenases in Pseudomonas putida HK5.</title>
        <authorList>
            <person name="Promden W."/>
            <person name="Vangnai A.S."/>
            <person name="Toyama H."/>
            <person name="Matsushita K."/>
            <person name="Pongsawasdi P."/>
        </authorList>
    </citation>
    <scope>INDUCTION</scope>
    <source>
        <strain>HK5</strain>
    </source>
</reference>
<organism>
    <name type="scientific">Pseudomonas putida</name>
    <name type="common">Arthrobacter siderocapsulatus</name>
    <dbReference type="NCBI Taxonomy" id="303"/>
    <lineage>
        <taxon>Bacteria</taxon>
        <taxon>Pseudomonadati</taxon>
        <taxon>Pseudomonadota</taxon>
        <taxon>Gammaproteobacteria</taxon>
        <taxon>Pseudomonadales</taxon>
        <taxon>Pseudomonadaceae</taxon>
        <taxon>Pseudomonas</taxon>
    </lineage>
</organism>
<sequence length="623" mass="68727">MTIRSLPAALSPLSMAVQAVLLVSSLALAPAANAKPVTWEDIANDHLNTQNVLQYGMGTNAQRWSPLAMVNDKNVFKLTPAWSYSFGDERQRGQESQAIINDGVIYVTGSYSRVFALDAKTGRRLWTYNHRLPDNIRPCCDVVNRGAAIFGDKIYFGTLDARVIALNKDTGKVVWNKKFGDHSAGYTMTGAPTLIKDQKSGKVLLIHGSSGDEFGVVGQLYARDPETGEEVWMRPFVEGHMGRLNGKDSTPTGDVKAPSWPDDPTTETGKVESWSHGGGAPWQSASFDPETNTIIVGAGNPGPWNTWARTSKDGNPHDFDSLYTSGQVGVDPTTGEVKWFYQHTPNDAWDFSGNNELVLFDYKDKDGKQYKATAHADRNGFFYVVDRTNGKLKNAFPFVDNITWASHIDLKTGRPVENEGQRPAKPLPGETKGKPVEVSPPFLGGKNWNPMAYSQDTGLFYVPANHWKEEYWTEEVNYKKGSAYLGIGFRIKRMYEDHVGSLRAMDPTTGKVVWEHNERLPLWAGVLATKGNLVFTGTGDGYFKAFNAKTGEELWKFQTGSGIVSPPITWEQDGEQYIGVTVGYGGAVPLWGGDMAELTKPVAQGGSFWVFKIPAWDTKTAKR</sequence>
<feature type="signal peptide" evidence="2">
    <location>
        <begin position="1"/>
        <end position="34"/>
    </location>
</feature>
<feature type="chain" id="PRO_0000419533" description="Quinoprotein ethanol dehydrogenase" evidence="4">
    <location>
        <begin position="35"/>
        <end position="623"/>
    </location>
</feature>
<feature type="repeat" description="WD 1" evidence="2">
    <location>
        <begin position="515"/>
        <end position="556"/>
    </location>
</feature>
<feature type="repeat" description="WD 2" evidence="2">
    <location>
        <begin position="559"/>
        <end position="601"/>
    </location>
</feature>
<feature type="region of interest" description="Disordered" evidence="3">
    <location>
        <begin position="242"/>
        <end position="279"/>
    </location>
</feature>
<feature type="region of interest" description="Disordered" evidence="3">
    <location>
        <begin position="414"/>
        <end position="436"/>
    </location>
</feature>
<feature type="active site" description="Proton acceptor" evidence="1">
    <location>
        <position position="350"/>
    </location>
</feature>
<feature type="binding site" evidence="1">
    <location>
        <position position="45"/>
    </location>
    <ligand>
        <name>Ca(2+)</name>
        <dbReference type="ChEBI" id="CHEBI:29108"/>
        <label>1</label>
    </ligand>
</feature>
<feature type="binding site" evidence="1">
    <location>
        <position position="51"/>
    </location>
    <ligand>
        <name>Ca(2+)</name>
        <dbReference type="ChEBI" id="CHEBI:29108"/>
        <label>1</label>
    </ligand>
</feature>
<feature type="binding site" evidence="1">
    <location>
        <position position="95"/>
    </location>
    <ligand>
        <name>pyrroloquinoline quinone</name>
        <dbReference type="ChEBI" id="CHEBI:58442"/>
    </ligand>
</feature>
<feature type="binding site" evidence="1">
    <location>
        <position position="145"/>
    </location>
    <ligand>
        <name>pyrroloquinoline quinone</name>
        <dbReference type="ChEBI" id="CHEBI:58442"/>
    </ligand>
</feature>
<feature type="binding site" evidence="1">
    <location>
        <position position="189"/>
    </location>
    <ligand>
        <name>pyrroloquinoline quinone</name>
        <dbReference type="ChEBI" id="CHEBI:58442"/>
    </ligand>
</feature>
<feature type="binding site" evidence="1">
    <location>
        <begin position="207"/>
        <end position="209"/>
    </location>
    <ligand>
        <name>pyrroloquinoline quinone</name>
        <dbReference type="ChEBI" id="CHEBI:58442"/>
    </ligand>
</feature>
<feature type="binding site" evidence="1">
    <location>
        <position position="213"/>
    </location>
    <ligand>
        <name>Ca(2+)</name>
        <dbReference type="ChEBI" id="CHEBI:29108"/>
        <label>2</label>
        <note>catalytic</note>
    </ligand>
</feature>
<feature type="binding site" evidence="1">
    <location>
        <position position="300"/>
    </location>
    <ligand>
        <name>Ca(2+)</name>
        <dbReference type="ChEBI" id="CHEBI:29108"/>
        <label>2</label>
        <note>catalytic</note>
    </ligand>
</feature>
<feature type="binding site" evidence="1">
    <location>
        <position position="350"/>
    </location>
    <ligand>
        <name>Ca(2+)</name>
        <dbReference type="ChEBI" id="CHEBI:29108"/>
        <label>2</label>
        <note>catalytic</note>
    </ligand>
</feature>
<feature type="binding site" evidence="1">
    <location>
        <position position="378"/>
    </location>
    <ligand>
        <name>pyrroloquinoline quinone</name>
        <dbReference type="ChEBI" id="CHEBI:58442"/>
    </ligand>
</feature>
<feature type="binding site" evidence="1">
    <location>
        <position position="523"/>
    </location>
    <ligand>
        <name>pyrroloquinoline quinone</name>
        <dbReference type="ChEBI" id="CHEBI:58442"/>
    </ligand>
</feature>
<feature type="binding site" evidence="1">
    <location>
        <position position="587"/>
    </location>
    <ligand>
        <name>pyrroloquinoline quinone</name>
        <dbReference type="ChEBI" id="CHEBI:58442"/>
    </ligand>
</feature>
<feature type="disulfide bond" evidence="1">
    <location>
        <begin position="139"/>
        <end position="140"/>
    </location>
</feature>
<evidence type="ECO:0000250" key="1">
    <source>
        <dbReference type="UniProtKB" id="Q9Z4J7"/>
    </source>
</evidence>
<evidence type="ECO:0000255" key="2"/>
<evidence type="ECO:0000256" key="3">
    <source>
        <dbReference type="SAM" id="MobiDB-lite"/>
    </source>
</evidence>
<evidence type="ECO:0000269" key="4">
    <source>
    </source>
</evidence>
<evidence type="ECO:0000269" key="5">
    <source>
    </source>
</evidence>
<evidence type="ECO:0000269" key="6">
    <source>
    </source>
</evidence>
<evidence type="ECO:0000303" key="7">
    <source>
    </source>
</evidence>
<evidence type="ECO:0000303" key="8">
    <source>
    </source>
</evidence>
<evidence type="ECO:0000305" key="9"/>
<evidence type="ECO:0000305" key="10">
    <source>
    </source>
</evidence>
<evidence type="ECO:0000305" key="11">
    <source>
    </source>
</evidence>
<protein>
    <recommendedName>
        <fullName evidence="7">Quinoprotein ethanol dehydrogenase</fullName>
        <shortName evidence="7">QEDH</shortName>
        <ecNumber evidence="10 11">1.1.2.8</ecNumber>
    </recommendedName>
    <alternativeName>
        <fullName evidence="9">Quinoprotein alcohol dehydrogenase (cytochrome c)</fullName>
    </alternativeName>
    <alternativeName>
        <fullName evidence="9">Quinoprotein alcohol dehydrogenase (cytochrome c550)</fullName>
    </alternativeName>
    <alternativeName>
        <fullName evidence="8">Quinoprotein alcohol dehydrogenase ADH I</fullName>
        <shortName evidence="8">ADH I</shortName>
    </alternativeName>
</protein>
<comment type="function">
    <text evidence="1 4 6">Catalyzes the oxidation of ethanol and other primary alcohols to the corresponding aldehydes, except methanol, which is not a substrate (PubMed:7730276). Uses a specific inducible cytochrome c550, encoded by the adjacent gene in the locus, as electron acceptor (By similarity). Is a key enzyme of the carbon and energy metabolism during growth of P.putida on ethanol as the sole carbon and energy source (PubMed:18218017). Displays lower activity on secondary alcohols, aldehydes and diols. Is not active with sugar alcohols such as glycerol and D-sorbitol (PubMed:7730276). In vitro, reacts well with phenazine methosulfate (PMS) as an electron acceptor but not with NAD(P), potassium ferricyanide, or molecular oxygen (PubMed:7730276).</text>
</comment>
<comment type="catalytic activity">
    <reaction evidence="10 11">
        <text>a primary alcohol + 2 Fe(III)-[cytochrome c] = an aldehyde + 2 Fe(II)-[cytochrome c] + 2 H(+)</text>
        <dbReference type="Rhea" id="RHEA:51020"/>
        <dbReference type="Rhea" id="RHEA-COMP:10350"/>
        <dbReference type="Rhea" id="RHEA-COMP:14399"/>
        <dbReference type="ChEBI" id="CHEBI:15378"/>
        <dbReference type="ChEBI" id="CHEBI:15734"/>
        <dbReference type="ChEBI" id="CHEBI:17478"/>
        <dbReference type="ChEBI" id="CHEBI:29033"/>
        <dbReference type="ChEBI" id="CHEBI:29034"/>
        <dbReference type="EC" id="1.1.2.8"/>
    </reaction>
    <physiologicalReaction direction="left-to-right" evidence="4">
        <dbReference type="Rhea" id="RHEA:51021"/>
    </physiologicalReaction>
</comment>
<comment type="catalytic activity">
    <reaction evidence="10 11">
        <text>ethanol + 2 Fe(III)-[cytochrome c] = acetaldehyde + 2 Fe(II)-[cytochrome c] + 2 H(+)</text>
        <dbReference type="Rhea" id="RHEA:62200"/>
        <dbReference type="Rhea" id="RHEA-COMP:10350"/>
        <dbReference type="Rhea" id="RHEA-COMP:14399"/>
        <dbReference type="ChEBI" id="CHEBI:15343"/>
        <dbReference type="ChEBI" id="CHEBI:15378"/>
        <dbReference type="ChEBI" id="CHEBI:16236"/>
        <dbReference type="ChEBI" id="CHEBI:29033"/>
        <dbReference type="ChEBI" id="CHEBI:29034"/>
    </reaction>
    <physiologicalReaction direction="left-to-right" evidence="4">
        <dbReference type="Rhea" id="RHEA:62201"/>
    </physiologicalReaction>
</comment>
<comment type="catalytic activity">
    <reaction evidence="6">
        <text>ethanol + A = acetaldehyde + AH2</text>
        <dbReference type="Rhea" id="RHEA:33567"/>
        <dbReference type="ChEBI" id="CHEBI:13193"/>
        <dbReference type="ChEBI" id="CHEBI:15343"/>
        <dbReference type="ChEBI" id="CHEBI:16236"/>
        <dbReference type="ChEBI" id="CHEBI:17499"/>
    </reaction>
</comment>
<comment type="catalytic activity">
    <reaction evidence="11">
        <text>1-propanol + 2 Fe(III)-[cytochrome c] = propanal + 2 Fe(II)-[cytochrome c] + 2 H(+)</text>
        <dbReference type="Rhea" id="RHEA:62204"/>
        <dbReference type="Rhea" id="RHEA-COMP:10350"/>
        <dbReference type="Rhea" id="RHEA-COMP:14399"/>
        <dbReference type="ChEBI" id="CHEBI:15378"/>
        <dbReference type="ChEBI" id="CHEBI:17153"/>
        <dbReference type="ChEBI" id="CHEBI:28831"/>
        <dbReference type="ChEBI" id="CHEBI:29033"/>
        <dbReference type="ChEBI" id="CHEBI:29034"/>
    </reaction>
</comment>
<comment type="cofactor">
    <cofactor evidence="6">
        <name>pyrroloquinoline quinone</name>
        <dbReference type="ChEBI" id="CHEBI:58442"/>
    </cofactor>
    <text evidence="1 6">Binds 1 PQQ group non-covalently per subunit (PubMed:7730276). PQQ is inserted between disulfide Cys-139-Cys-140 and the plane of Trp-282 (By similarity).</text>
</comment>
<comment type="cofactor">
    <cofactor evidence="1">
        <name>Ca(2+)</name>
        <dbReference type="ChEBI" id="CHEBI:29108"/>
    </cofactor>
    <text evidence="1">Binds 2 calcium ions per subunit. One is located in the active-site cavity near PQQ and the second calcium binds at the N-terminus and contributes to the stability of the native enzyme.</text>
</comment>
<comment type="activity regulation">
    <text evidence="6">Enhanced by the presence of ethylamine or NH4(+) ions.</text>
</comment>
<comment type="biophysicochemical properties">
    <kinetics>
        <KM evidence="6">0.163 mM for ethanol</KM>
        <KM evidence="6">1.62 mM for butan-1-ol</KM>
        <KM evidence="6">24.9 mM for propane-1,2-diol</KM>
        <Vmax evidence="6">26.3 umol/min/mg enzyme with ethanol as substrate</Vmax>
        <Vmax evidence="6">21.5 umol/min/mg enzyme with butan-1-ol as substrate</Vmax>
        <Vmax evidence="6">12.3 umol/min/mg enzyme with propane-1,2-diol as substrate</Vmax>
    </kinetics>
    <phDependence>
        <text evidence="6">Optimum pH is 9.0.</text>
    </phDependence>
</comment>
<comment type="pathway">
    <text>Alcohol metabolism; ethanol degradation; acetate from ethanol: step 1/2.</text>
</comment>
<comment type="subunit">
    <text evidence="6">Homodimer.</text>
</comment>
<comment type="subcellular location">
    <subcellularLocation>
        <location evidence="10">Periplasm</location>
    </subcellularLocation>
</comment>
<comment type="induction">
    <text evidence="4 5 6">Induced by ethanol, and to a lesser extent, by 1-propanol and other alcohols (PubMed:19202108, PubMed:7730276). Repressed by lactate, acetate and tricarboxylic acid cycle intermediates such as citrate and succinate (PubMed:19202108). Up-regulated by exaE and agmR (PubMed:18218017, PubMed:19202108).</text>
</comment>
<comment type="disruption phenotype">
    <text evidence="4">Cells lacking this gene show a strong reduction in the growth rate on ethanol, however growth on 1-butanol or 1,2-propanediol is not influenced.</text>
</comment>
<comment type="similarity">
    <text evidence="9">Belongs to the bacterial PQQ dehydrogenase family.</text>
</comment>